<sequence>MNGERIIAFQGRPGAYSDLACRQARPGWTTLPCQTFAQTIAAVHDGRAELAMLACENSLAGRVPDIHALLPEAGLFIVGEHFQRVEHCLLGIPGSTLADARRIHTHPVAMAQVRGIITELGLDPVVEFDTAGAAEMVREWGRKEDVAVASALAAELNGLEILRRNVEDATHNTTRFYIASRRPATLPPPGPGFMTTLLFRVNNQPGALYKALGGLATAGVNMTRLESYMLEGSFSATQFLMDVEGHPEAPPLARALDELSFFSEQQEILGVYPASPFRRKP</sequence>
<protein>
    <recommendedName>
        <fullName evidence="8">Bifunctional N-acyl-homoserine lactone acylase/prephenate dehydratase</fullName>
        <shortName evidence="7">Bifunctional AHL acylase/PDT</shortName>
        <ecNumber evidence="5">3.5.1.97</ecNumber>
        <ecNumber evidence="9">4.2.1.51</ecNumber>
    </recommendedName>
    <alternativeName>
        <fullName evidence="7">Quorum quenching protein GqqA</fullName>
    </alternativeName>
</protein>
<gene>
    <name evidence="6" type="primary">gqqA</name>
    <name evidence="11" type="synonym">pheA</name>
    <name evidence="11" type="ORF">KOEU_05990</name>
</gene>
<organism>
    <name type="scientific">Komagataeibacter europaeus</name>
    <name type="common">Gluconacetobacter europaeus</name>
    <dbReference type="NCBI Taxonomy" id="33995"/>
    <lineage>
        <taxon>Bacteria</taxon>
        <taxon>Pseudomonadati</taxon>
        <taxon>Pseudomonadota</taxon>
        <taxon>Alphaproteobacteria</taxon>
        <taxon>Acetobacterales</taxon>
        <taxon>Acetobacteraceae</taxon>
        <taxon>Komagataeibacter</taxon>
    </lineage>
</organism>
<keyword id="KW-0002">3D-structure</keyword>
<keyword id="KW-0028">Amino-acid biosynthesis</keyword>
<keyword id="KW-0057">Aromatic amino acid biosynthesis</keyword>
<keyword id="KW-0378">Hydrolase</keyword>
<keyword id="KW-0456">Lyase</keyword>
<keyword id="KW-0511">Multifunctional enzyme</keyword>
<keyword id="KW-0584">Phenylalanine biosynthesis</keyword>
<keyword id="KW-0673">Quorum sensing</keyword>
<proteinExistence type="evidence at protein level"/>
<feature type="chain" id="PRO_0000461051" description="Bifunctional N-acyl-homoserine lactone acylase/prephenate dehydratase">
    <location>
        <begin position="1"/>
        <end position="281"/>
    </location>
</feature>
<feature type="domain" description="Prephenate dehydratase" evidence="2">
    <location>
        <begin position="6"/>
        <end position="181"/>
    </location>
</feature>
<feature type="domain" description="ACT" evidence="3">
    <location>
        <begin position="196"/>
        <end position="273"/>
    </location>
</feature>
<feature type="binding site" evidence="5 12 13">
    <location>
        <position position="207"/>
    </location>
    <ligand>
        <name>L-phenylalanine</name>
        <dbReference type="ChEBI" id="CHEBI:58095"/>
    </ligand>
</feature>
<feature type="binding site" evidence="5 12 13">
    <location>
        <position position="208"/>
    </location>
    <ligand>
        <name>L-phenylalanine</name>
        <dbReference type="ChEBI" id="CHEBI:58095"/>
    </ligand>
</feature>
<feature type="binding site" evidence="5 12 13">
    <location>
        <position position="221"/>
    </location>
    <ligand>
        <name>L-phenylalanine</name>
        <dbReference type="ChEBI" id="CHEBI:58095"/>
    </ligand>
</feature>
<feature type="binding site" evidence="5 12 13">
    <location>
        <position position="222"/>
    </location>
    <ligand>
        <name>L-phenylalanine</name>
        <dbReference type="ChEBI" id="CHEBI:58095"/>
    </ligand>
</feature>
<feature type="site" description="Essential for prephenate dehydratase activity" evidence="1">
    <location>
        <position position="174"/>
    </location>
</feature>
<feature type="mutagenesis site" description="Affects dimerization. Loss of N-acyl-homoserine lactone acylase activity." evidence="5">
    <original>R</original>
    <variation>S</variation>
    <location>
        <position position="25"/>
    </location>
</feature>
<feature type="mutagenesis site" description="Does not affect N-acyl-homoserine lactone acylase activity." evidence="5">
    <original>T</original>
    <variation>S</variation>
    <location>
        <position position="118"/>
    </location>
</feature>
<feature type="mutagenesis site" description="Loss of N-acyl-homoserine lactone acylase activity." evidence="5">
    <original>PPPGP</original>
    <variation>AS</variation>
    <location>
        <begin position="187"/>
        <end position="191"/>
    </location>
</feature>
<feature type="mutagenesis site" description="Loss of N-acyl-homoserine lactone acylase activity." evidence="5">
    <original>F</original>
    <variation>S</variation>
    <location>
        <position position="261"/>
    </location>
</feature>
<feature type="mutagenesis site" description="Does not affect N-acyl-homoserine lactone acylase activity." evidence="5">
    <location>
        <begin position="279"/>
        <end position="281"/>
    </location>
</feature>
<feature type="strand" evidence="14">
    <location>
        <begin position="6"/>
        <end position="11"/>
    </location>
</feature>
<feature type="helix" evidence="14">
    <location>
        <begin position="16"/>
        <end position="24"/>
    </location>
</feature>
<feature type="strand" evidence="14">
    <location>
        <begin position="29"/>
        <end position="35"/>
    </location>
</feature>
<feature type="helix" evidence="14">
    <location>
        <begin position="36"/>
        <end position="44"/>
    </location>
</feature>
<feature type="strand" evidence="14">
    <location>
        <begin position="49"/>
        <end position="59"/>
    </location>
</feature>
<feature type="strand" evidence="14">
    <location>
        <begin position="62"/>
        <end position="64"/>
    </location>
</feature>
<feature type="helix" evidence="14">
    <location>
        <begin position="69"/>
        <end position="72"/>
    </location>
</feature>
<feature type="strand" evidence="14">
    <location>
        <begin position="75"/>
        <end position="84"/>
    </location>
</feature>
<feature type="strand" evidence="15">
    <location>
        <begin position="88"/>
        <end position="91"/>
    </location>
</feature>
<feature type="turn" evidence="15">
    <location>
        <begin position="97"/>
        <end position="99"/>
    </location>
</feature>
<feature type="strand" evidence="15">
    <location>
        <begin position="102"/>
        <end position="105"/>
    </location>
</feature>
<feature type="helix" evidence="15">
    <location>
        <begin position="107"/>
        <end position="112"/>
    </location>
</feature>
<feature type="helix" evidence="15">
    <location>
        <begin position="114"/>
        <end position="120"/>
    </location>
</feature>
<feature type="strand" evidence="15">
    <location>
        <begin position="123"/>
        <end position="126"/>
    </location>
</feature>
<feature type="helix" evidence="15">
    <location>
        <begin position="130"/>
        <end position="139"/>
    </location>
</feature>
<feature type="strand" evidence="15">
    <location>
        <begin position="145"/>
        <end position="149"/>
    </location>
</feature>
<feature type="helix" evidence="15">
    <location>
        <begin position="151"/>
        <end position="157"/>
    </location>
</feature>
<feature type="strand" evidence="15">
    <location>
        <begin position="160"/>
        <end position="165"/>
    </location>
</feature>
<feature type="strand" evidence="14">
    <location>
        <begin position="173"/>
        <end position="181"/>
    </location>
</feature>
<feature type="strand" evidence="14">
    <location>
        <begin position="193"/>
        <end position="204"/>
    </location>
</feature>
<feature type="helix" evidence="14">
    <location>
        <begin position="207"/>
        <end position="218"/>
    </location>
</feature>
<feature type="strand" evidence="14">
    <location>
        <begin position="222"/>
        <end position="230"/>
    </location>
</feature>
<feature type="strand" evidence="14">
    <location>
        <begin position="233"/>
        <end position="245"/>
    </location>
</feature>
<feature type="helix" evidence="14">
    <location>
        <begin position="252"/>
        <end position="261"/>
    </location>
</feature>
<feature type="strand" evidence="14">
    <location>
        <begin position="264"/>
        <end position="273"/>
    </location>
</feature>
<feature type="helix" evidence="14">
    <location>
        <begin position="276"/>
        <end position="279"/>
    </location>
</feature>
<name>GQQA_KOMEU</name>
<evidence type="ECO:0000255" key="1"/>
<evidence type="ECO:0000255" key="2">
    <source>
        <dbReference type="PROSITE-ProRule" id="PRU00517"/>
    </source>
</evidence>
<evidence type="ECO:0000255" key="3">
    <source>
        <dbReference type="PROSITE-ProRule" id="PRU01007"/>
    </source>
</evidence>
<evidence type="ECO:0000269" key="4">
    <source>
    </source>
</evidence>
<evidence type="ECO:0000269" key="5">
    <source>
    </source>
</evidence>
<evidence type="ECO:0000303" key="6">
    <source>
    </source>
</evidence>
<evidence type="ECO:0000303" key="7">
    <source>
    </source>
</evidence>
<evidence type="ECO:0000305" key="8"/>
<evidence type="ECO:0000305" key="9">
    <source>
    </source>
</evidence>
<evidence type="ECO:0000312" key="10">
    <source>
        <dbReference type="EMBL" id="ALR83482.1"/>
    </source>
</evidence>
<evidence type="ECO:0000312" key="11">
    <source>
        <dbReference type="EMBL" id="KON65911.1"/>
    </source>
</evidence>
<evidence type="ECO:0007744" key="12">
    <source>
        <dbReference type="PDB" id="7ALZ"/>
    </source>
</evidence>
<evidence type="ECO:0007744" key="13">
    <source>
        <dbReference type="PDB" id="7AM0"/>
    </source>
</evidence>
<evidence type="ECO:0007829" key="14">
    <source>
        <dbReference type="PDB" id="7ALZ"/>
    </source>
</evidence>
<evidence type="ECO:0007829" key="15">
    <source>
        <dbReference type="PDB" id="7AM0"/>
    </source>
</evidence>
<dbReference type="EC" id="3.5.1.97" evidence="5"/>
<dbReference type="EC" id="4.2.1.51" evidence="9"/>
<dbReference type="EMBL" id="KT266808">
    <property type="protein sequence ID" value="ALR83482.1"/>
    <property type="molecule type" value="Genomic_DNA"/>
</dbReference>
<dbReference type="EMBL" id="LHUQ01000002">
    <property type="protein sequence ID" value="KON65911.1"/>
    <property type="molecule type" value="Genomic_DNA"/>
</dbReference>
<dbReference type="RefSeq" id="WP_010507907.1">
    <property type="nucleotide sequence ID" value="NZ_LHUQ01000002.1"/>
</dbReference>
<dbReference type="PDB" id="7ALZ">
    <property type="method" value="X-ray"/>
    <property type="resolution" value="1.67 A"/>
    <property type="chains" value="A/B=1-281"/>
</dbReference>
<dbReference type="PDB" id="7AM0">
    <property type="method" value="X-ray"/>
    <property type="resolution" value="2.50 A"/>
    <property type="chains" value="A/B/C/D=1-281"/>
</dbReference>
<dbReference type="PDBsum" id="7ALZ"/>
<dbReference type="PDBsum" id="7AM0"/>
<dbReference type="SMR" id="A0A0M0ELU2"/>
<dbReference type="STRING" id="33995.KOEU_05990"/>
<dbReference type="KEGG" id="keu:S101446_00927"/>
<dbReference type="PATRIC" id="fig|33995.3.peg.664"/>
<dbReference type="OrthoDB" id="9802281at2"/>
<dbReference type="UniPathway" id="UPA00121">
    <property type="reaction ID" value="UER00345"/>
</dbReference>
<dbReference type="Proteomes" id="UP000037566">
    <property type="component" value="Unassembled WGS sequence"/>
</dbReference>
<dbReference type="GO" id="GO:0005737">
    <property type="term" value="C:cytoplasm"/>
    <property type="evidence" value="ECO:0007669"/>
    <property type="project" value="TreeGrafter"/>
</dbReference>
<dbReference type="GO" id="GO:0016787">
    <property type="term" value="F:hydrolase activity"/>
    <property type="evidence" value="ECO:0007669"/>
    <property type="project" value="UniProtKB-KW"/>
</dbReference>
<dbReference type="GO" id="GO:0004664">
    <property type="term" value="F:prephenate dehydratase activity"/>
    <property type="evidence" value="ECO:0007669"/>
    <property type="project" value="UniProtKB-EC"/>
</dbReference>
<dbReference type="GO" id="GO:0009094">
    <property type="term" value="P:L-phenylalanine biosynthetic process"/>
    <property type="evidence" value="ECO:0007669"/>
    <property type="project" value="UniProtKB-UniPathway"/>
</dbReference>
<dbReference type="GO" id="GO:0009372">
    <property type="term" value="P:quorum sensing"/>
    <property type="evidence" value="ECO:0007669"/>
    <property type="project" value="UniProtKB-KW"/>
</dbReference>
<dbReference type="CDD" id="cd04905">
    <property type="entry name" value="ACT_CM-PDT"/>
    <property type="match status" value="1"/>
</dbReference>
<dbReference type="CDD" id="cd13631">
    <property type="entry name" value="PBP2_Ct-PDT_like"/>
    <property type="match status" value="1"/>
</dbReference>
<dbReference type="Gene3D" id="3.30.70.260">
    <property type="match status" value="1"/>
</dbReference>
<dbReference type="Gene3D" id="3.40.190.10">
    <property type="entry name" value="Periplasmic binding protein-like II"/>
    <property type="match status" value="2"/>
</dbReference>
<dbReference type="InterPro" id="IPR045865">
    <property type="entry name" value="ACT-like_dom_sf"/>
</dbReference>
<dbReference type="InterPro" id="IPR002912">
    <property type="entry name" value="ACT_dom"/>
</dbReference>
<dbReference type="InterPro" id="IPR008242">
    <property type="entry name" value="Chor_mutase/pphenate_deHydtase"/>
</dbReference>
<dbReference type="InterPro" id="IPR001086">
    <property type="entry name" value="Preph_deHydtase"/>
</dbReference>
<dbReference type="NCBIfam" id="NF008866">
    <property type="entry name" value="PRK11899.1"/>
    <property type="match status" value="1"/>
</dbReference>
<dbReference type="PANTHER" id="PTHR21022">
    <property type="entry name" value="PREPHENATE DEHYDRATASE P PROTEIN"/>
    <property type="match status" value="1"/>
</dbReference>
<dbReference type="PANTHER" id="PTHR21022:SF19">
    <property type="entry name" value="PREPHENATE DEHYDRATASE-RELATED"/>
    <property type="match status" value="1"/>
</dbReference>
<dbReference type="Pfam" id="PF00800">
    <property type="entry name" value="PDT"/>
    <property type="match status" value="1"/>
</dbReference>
<dbReference type="PIRSF" id="PIRSF001500">
    <property type="entry name" value="Chor_mut_pdt_Ppr"/>
    <property type="match status" value="1"/>
</dbReference>
<dbReference type="SUPFAM" id="SSF55021">
    <property type="entry name" value="ACT-like"/>
    <property type="match status" value="1"/>
</dbReference>
<dbReference type="SUPFAM" id="SSF53850">
    <property type="entry name" value="Periplasmic binding protein-like II"/>
    <property type="match status" value="1"/>
</dbReference>
<dbReference type="PROSITE" id="PS51671">
    <property type="entry name" value="ACT"/>
    <property type="match status" value="1"/>
</dbReference>
<dbReference type="PROSITE" id="PS51171">
    <property type="entry name" value="PREPHENATE_DEHYDR_3"/>
    <property type="match status" value="1"/>
</dbReference>
<comment type="function">
    <text evidence="4 5">Multifunctional enzyme that acts on N-acyl-homoserine lactones (AHLs), beta-lactam antibiotics and shows prephenate dehydratase activity (PubMed:34112823). Acts as an acylase on AHL and hydrolyzes the amide bond of the acyl side-chain of AHL molecules, releasing homoserine lactone (HSL) and the fatty acid (PubMed:34112823). Can use different 3-oxo-acyl homoserine lactones, such as 3-oxo-decanoyl homoserine lactone, which is the preferred substrate, 3-oxo-octanoyl homoserine lactone, 3-oxo-hexanoyl homoserine lactone and 3-oxo-dodecanoyl homoserine lactone (PubMed:34112823). It can also degrade various beta-lactam antibiotics, including penicillin G, amoxicillin and ampicillin, but not cefotaxime (PubMed:34112823). In addition, it can complement a phenylalanine auxotrophic E.coli mutant, which carries a kanamycin gene inserted into pheA, suggesting that GqqA can also function as a prephenate dehydratase (PubMed:34112823). Involved in bacterial quorum quenching (QQ) and cellulose biofilm formation (PubMed:27221658).</text>
</comment>
<comment type="catalytic activity">
    <reaction evidence="5">
        <text>an N-acyl-L-homoserine lactone + H2O = L-homoserine lactone + a carboxylate</text>
        <dbReference type="Rhea" id="RHEA:18937"/>
        <dbReference type="ChEBI" id="CHEBI:15377"/>
        <dbReference type="ChEBI" id="CHEBI:29067"/>
        <dbReference type="ChEBI" id="CHEBI:55474"/>
        <dbReference type="ChEBI" id="CHEBI:58633"/>
        <dbReference type="EC" id="3.5.1.97"/>
    </reaction>
</comment>
<comment type="catalytic activity">
    <reaction evidence="9">
        <text>prephenate + H(+) = 3-phenylpyruvate + CO2 + H2O</text>
        <dbReference type="Rhea" id="RHEA:21648"/>
        <dbReference type="ChEBI" id="CHEBI:15377"/>
        <dbReference type="ChEBI" id="CHEBI:15378"/>
        <dbReference type="ChEBI" id="CHEBI:16526"/>
        <dbReference type="ChEBI" id="CHEBI:18005"/>
        <dbReference type="ChEBI" id="CHEBI:29934"/>
        <dbReference type="EC" id="4.2.1.51"/>
    </reaction>
</comment>
<comment type="biophysicochemical properties">
    <kinetics>
        <KM evidence="5">2.36 mM for 3-oxo-decanoyl homoserine lactone</KM>
        <KM evidence="5">4.87 mM for 3-oxo-octanoyl homoserine lactone</KM>
        <KM evidence="5">6.89 mM for 3-oxo-hexanoyl homoserine lactone</KM>
        <KM evidence="5">16.7 mM for 3-oxo-dodecanoyl homoserine lactone</KM>
        <Vmax evidence="5">152.0 umol/min/mg enzyme with 3-oxo-decanoyl homoserine lactone as substrate</Vmax>
        <Vmax evidence="5">117.0 umol/min/mg enzyme with 3-oxo-octanoyl homoserine lactone as substrate</Vmax>
        <Vmax evidence="5">109.0 umol/min/mg enzyme with 3-oxo-hexanoyl homoserine lactone as substrate</Vmax>
        <Vmax evidence="5">13.0 umol/min/mg enzyme with 3-oxo-dodecanoyl homoserine lactone as substrate</Vmax>
    </kinetics>
</comment>
<comment type="pathway">
    <text evidence="8">Amino-acid biosynthesis; L-phenylalanine biosynthesis; phenylpyruvate from prephenate: step 1/1.</text>
</comment>
<comment type="subunit">
    <text evidence="5">Homodimer.</text>
</comment>
<comment type="domain">
    <text evidence="5">Consists of three domains: the N-terminal and middle domains form the functional unit, which is homologous to the catalytic PBP domain of the prephenate dehydratase, whereas the C-terminal domain is homologous to the regulatory ACT domain.</text>
</comment>
<reference evidence="10" key="1">
    <citation type="submission" date="2015-07" db="EMBL/GenBank/DDBJ databases">
        <title>Functional screening of activities from the genome of the strain CECT 8546 of Komagataeibacter europaeus.</title>
        <authorList>
            <person name="Valera M.J."/>
            <person name="Mas A."/>
            <person name="Streit W.R."/>
            <person name="Mateo E."/>
        </authorList>
    </citation>
    <scope>NUCLEOTIDE SEQUENCE [GENOMIC DNA]</scope>
    <source>
        <strain>CECT 8546</strain>
    </source>
</reference>
<reference evidence="11" key="2">
    <citation type="submission" date="2015-08" db="EMBL/GenBank/DDBJ databases">
        <title>Draft genome sequence of Komagataeibacter europaeus CECT 8546 a cellulose producer strain from vinegar produced by the traditional method.</title>
        <authorList>
            <person name="Poehlein A."/>
            <person name="Valera M.J."/>
            <person name="Haack F.S."/>
            <person name="Mas A."/>
            <person name="Daniel R."/>
            <person name="Streit W.R."/>
            <person name="Mateo E."/>
        </authorList>
    </citation>
    <scope>NUCLEOTIDE SEQUENCE [LARGE SCALE GENOMIC DNA]</scope>
    <source>
        <strain>CECT 8546</strain>
    </source>
</reference>
<reference key="3">
    <citation type="journal article" date="2016" name="Microb. Cell Fact.">
        <title>GqqA, a novel protein in Komagataeibacter europaeus involved in bacterial quorum quenching and cellulose formation.</title>
        <authorList>
            <person name="Valera M.J."/>
            <person name="Mas A."/>
            <person name="Streit W.R."/>
            <person name="Mateo E."/>
        </authorList>
    </citation>
    <scope>FUNCTION</scope>
    <source>
        <strain>CECT 8546</strain>
    </source>
</reference>
<reference evidence="12 13" key="4">
    <citation type="journal article" date="2021" name="Sci. Rep.">
        <title>The Komagataeibacter europaeus GqqA is the prototype of a novel bifunctional N-Acyl-homoserine lactone acylase with prephenate dehydratase activity.</title>
        <authorList>
            <person name="Werner N."/>
            <person name="Petersen K."/>
            <person name="Vollstedt C."/>
            <person name="Garcia P.P."/>
            <person name="Chow J."/>
            <person name="Ferrer M."/>
            <person name="Fernandez-Lopez L."/>
            <person name="Falke S."/>
            <person name="Perbandt M."/>
            <person name="Hinrichs W."/>
            <person name="Betzel C."/>
            <person name="Streit W.R."/>
        </authorList>
    </citation>
    <scope>X-RAY CRYSTALLOGRAPHY (1.67 ANGSTROMS) IN COMPLEX WITH PHENYLALANINE</scope>
    <scope>FUNCTION</scope>
    <scope>CATALYTIC ACTIVITY</scope>
    <scope>BIOPHYSICOCHEMICAL PROPERTIES</scope>
    <scope>SUBUNIT</scope>
    <scope>DOMAIN</scope>
    <scope>MUTAGENESIS OF ARG-25; THR-118; 187-PRO--PRO-191; PHE-261 AND 279-ARG--PRO-281</scope>
</reference>
<accession>A0A0M0ELU2</accession>